<protein>
    <recommendedName>
        <fullName>Aurora/IPL1-related protein kinase 2</fullName>
        <ecNumber>2.7.11.1</ecNumber>
    </recommendedName>
    <alternativeName>
        <fullName>Serine/threonine-protein kinase aurora-B</fullName>
    </alternativeName>
</protein>
<name>AIR2_CAEEL</name>
<sequence>MENKPPVINLPEKETVNTPQKGGKFTINDFEIGRPLGKGKFGSVYLARTKTGHFHVAIKVLFKSQLISGGVEHQLEREIEIQSHLNHPNIIKLYTYFWDAKKIYLVLEYAPGGEMYKQLTVSKRFSEPTAAKYMYEIADALSYCHRKNVIHRDIKPENLLIGSQGELKIGDFGWSVHAPSNKRQTMCGTMDYLPPEMVNGADHSDAVDLWAIGVLCYEFLVGKPPFEHEDQSKTYAAIKAARFTYPDSVKKGARDLIGRLLVVDPKARCTLEQVKEHYWIQGMMEAKIRAEKQQKIEKEASLRNH</sequence>
<keyword id="KW-0067">ATP-binding</keyword>
<keyword id="KW-0131">Cell cycle</keyword>
<keyword id="KW-0132">Cell division</keyword>
<keyword id="KW-0156">Chromatin regulator</keyword>
<keyword id="KW-0158">Chromosome</keyword>
<keyword id="KW-0159">Chromosome partition</keyword>
<keyword id="KW-0963">Cytoplasm</keyword>
<keyword id="KW-0206">Cytoskeleton</keyword>
<keyword id="KW-0217">Developmental protein</keyword>
<keyword id="KW-0418">Kinase</keyword>
<keyword id="KW-0469">Meiosis</keyword>
<keyword id="KW-0498">Mitosis</keyword>
<keyword id="KW-0547">Nucleotide-binding</keyword>
<keyword id="KW-0597">Phosphoprotein</keyword>
<keyword id="KW-1185">Reference proteome</keyword>
<keyword id="KW-0723">Serine/threonine-protein kinase</keyword>
<keyword id="KW-0808">Transferase</keyword>
<reference key="1">
    <citation type="journal article" date="1998" name="J. Cell Biol.">
        <title>AIR-2: an Aurora/Ipl1-related protein kinase associated with chromosomes and midbody microtubules is required for polar body extrusion and cytokinesis in Caenorhabditis elegans embryos.</title>
        <authorList>
            <person name="Schumacher J.M."/>
            <person name="Golden A."/>
            <person name="Donovan P.J."/>
        </authorList>
    </citation>
    <scope>NUCLEOTIDE SEQUENCE [MRNA]</scope>
    <scope>FUNCTION</scope>
    <scope>SUBCELLULAR LOCATION</scope>
    <scope>DEVELOPMENTAL STAGE</scope>
    <source>
        <strain>Bristol N2</strain>
    </source>
</reference>
<reference key="2">
    <citation type="journal article" date="1998" name="Science">
        <title>Genome sequence of the nematode C. elegans: a platform for investigating biology.</title>
        <authorList>
            <consortium name="The C. elegans sequencing consortium"/>
        </authorList>
    </citation>
    <scope>NUCLEOTIDE SEQUENCE [LARGE SCALE GENOMIC DNA]</scope>
    <source>
        <strain>Bristol N2</strain>
    </source>
</reference>
<reference key="3">
    <citation type="journal article" date="1999" name="Mech. Dev.">
        <title>Stu-7/air-2 is a C. elegans aurora homologue essential for chromosome segregation during embryonic and post-embryonic development.</title>
        <authorList>
            <person name="Woollard A."/>
            <person name="Hodgkin J."/>
        </authorList>
    </citation>
    <scope>IDENTIFICATION</scope>
    <scope>FUNCTION</scope>
</reference>
<reference key="4">
    <citation type="journal article" date="2000" name="Cell">
        <title>Mitotic phosphorylation of histone H3 is governed by Ipl1/aurora kinase and Glc7/PP1 phosphatase in budding yeast and nematodes.</title>
        <authorList>
            <person name="Hsu J.-Y."/>
            <person name="Sun Z.-W."/>
            <person name="Li X."/>
            <person name="Reuben M."/>
            <person name="Tatchell K."/>
            <person name="Bishop D.K."/>
            <person name="Grushcow J.M."/>
            <person name="Brame C.J."/>
            <person name="Caldwell J.A."/>
            <person name="Hunt D.F."/>
            <person name="Lin R."/>
            <person name="Smith M.M."/>
            <person name="Allis C.D."/>
        </authorList>
    </citation>
    <scope>FUNCTION</scope>
</reference>
<reference key="5">
    <citation type="journal article" date="2000" name="Curr. Biol.">
        <title>The aurora-related kinase AIR-2 recruits ZEN-4/CeMKLP1 to the mitotic spindle at metaphase and is required for cytokinesis.</title>
        <authorList>
            <person name="Severson A.F."/>
            <person name="Hamill D.R."/>
            <person name="Carter J.C."/>
            <person name="Schumacher J."/>
            <person name="Bowerman B."/>
        </authorList>
    </citation>
    <scope>FUNCTION</scope>
    <scope>INTERACTION WITH ZEN-4</scope>
</reference>
<reference key="6">
    <citation type="journal article" date="2000" name="Curr. Biol.">
        <title>Incenp and an aurora-like kinase form a complex essential for chromosome segregation and efficient completion of cytokinesis.</title>
        <authorList>
            <person name="Kaitna S."/>
            <person name="Mendoza M."/>
            <person name="Jantsch-Plunger V."/>
            <person name="Glotzer M."/>
        </authorList>
    </citation>
    <scope>FUNCTION</scope>
    <scope>INTERACTION WITH ICP-1</scope>
</reference>
<reference key="7">
    <citation type="journal article" date="2000" name="Mol. Cell">
        <title>The survivin-like C. elegans BIR-1 protein acts with the Aurora-like kinase AIR-2 to affect chromosomes and the spindle midzone.</title>
        <authorList>
            <person name="Speliotes E.K."/>
            <person name="Uren A."/>
            <person name="Vaux D."/>
            <person name="Horvitz H.R."/>
        </authorList>
    </citation>
    <scope>FUNCTION</scope>
</reference>
<reference key="8">
    <citation type="journal article" date="2002" name="Curr. Biol.">
        <title>The aurora B kinase AIR-2 regulates kinetochores during mitosis and is required for separation of homologous Chromosomes during meiosis.</title>
        <authorList>
            <person name="Kaitna S."/>
            <person name="Pasierbek P."/>
            <person name="Jantsch M."/>
            <person name="Loidl J."/>
            <person name="Glotzer M."/>
        </authorList>
    </citation>
    <scope>FUNCTION</scope>
</reference>
<reference key="9">
    <citation type="journal article" date="2002" name="Genes Dev.">
        <title>C. elegans condensin promotes mitotic chromosome architecture, centromere organization, and sister chromatid segregation during mitosis and meiosis.</title>
        <authorList>
            <person name="Hagstrom K.A."/>
            <person name="Holmes V.F."/>
            <person name="Cozzarelli N.R."/>
            <person name="Meyer B.J."/>
        </authorList>
    </citation>
    <scope>FUNCTION</scope>
    <scope>DISRUPTION PHENOTYPE</scope>
</reference>
<reference key="10">
    <citation type="journal article" date="2002" name="J. Cell Biol.">
        <title>The aurora kinase AIR-2 functions in the release of chromosome cohesion in Caenorhabditis elegans meiosis.</title>
        <authorList>
            <person name="Rogers E."/>
            <person name="Bishop J.D."/>
            <person name="Waddle J.A."/>
            <person name="Schumacher J.M."/>
            <person name="Lin R."/>
        </authorList>
    </citation>
    <scope>FUNCTION</scope>
</reference>
<reference key="11">
    <citation type="journal article" date="2002" name="J. Cell Biol.">
        <title>The CeCDC-14 phosphatase is required for cytokinesis in the Caenorhabditis elegans embryo.</title>
        <authorList>
            <person name="Gruneberg U."/>
            <person name="Glotzer M."/>
            <person name="Gartner A."/>
            <person name="Nigg E.A."/>
        </authorList>
    </citation>
    <scope>FUNCTION</scope>
    <scope>DISRUPTION PHENOTYPE</scope>
</reference>
<reference key="12">
    <citation type="journal article" date="2003" name="J. Cell Biol.">
        <title>CSC-1: a subunit of the Aurora B kinase complex that binds to the survivin-like protein BIR-1 and the incenp-like protein ICP-1.</title>
        <authorList>
            <person name="Romano A."/>
            <person name="Guse A."/>
            <person name="Krascenicova I."/>
            <person name="Schnabel H."/>
            <person name="Schnabel R."/>
            <person name="Glotzer M."/>
        </authorList>
    </citation>
    <scope>FUNCTION</scope>
    <scope>IDENTIFICATION IN THE CHROMOSOMAL PASSENGER COMPLEX</scope>
    <scope>INTERACTION WITH ICP-1; CSC-1 AND BIR-1</scope>
</reference>
<reference key="13">
    <citation type="journal article" date="2005" name="Curr. Biol.">
        <title>Phosphorylation of ZEN-4/MKLP1 by aurora B regulates completion of cytokinesis.</title>
        <authorList>
            <person name="Guse A."/>
            <person name="Mishima M."/>
            <person name="Glotzer M."/>
        </authorList>
    </citation>
    <scope>FUNCTION</scope>
</reference>
<reference key="14">
    <citation type="journal article" date="2005" name="Curr. Biol.">
        <title>The C. elegans Tousled-like kinase contributes to chromosome segregation as a substrate and regulator of the Aurora B kinase.</title>
        <authorList>
            <person name="Han Z."/>
            <person name="Riefler G.M."/>
            <person name="Saam J.R."/>
            <person name="Mango S.E."/>
            <person name="Schumacher J.M."/>
        </authorList>
    </citation>
    <scope>FUNCTION</scope>
    <scope>INTERACTION WITH TLK-1</scope>
</reference>
<reference key="15">
    <citation type="journal article" date="2005" name="Mol. Biol. Cell">
        <title>The Caenorhabditis elegans Aurora B kinase AIR-2 phosphorylates and is required for the localization of a BimC kinesin to meiotic and mitotic spindles.</title>
        <authorList>
            <person name="Bishop J.D."/>
            <person name="Han Z."/>
            <person name="Schumacher J.M."/>
        </authorList>
    </citation>
    <scope>INTERACTION WITH BMK-1</scope>
</reference>
<reference key="16">
    <citation type="journal article" date="2008" name="Genes Dev.">
        <title>LAB-1 antagonizes the Aurora B kinase in C. elegans.</title>
        <authorList>
            <person name="de Carvalho C.E."/>
            <person name="Zaaijer S."/>
            <person name="Smolikov S."/>
            <person name="Gu Y."/>
            <person name="Schumacher J.M."/>
            <person name="Colaiacovo M.P."/>
        </authorList>
    </citation>
    <scope>FUNCTION</scope>
    <scope>SUBCELLULAR LOCATION</scope>
    <scope>MUTAGENESIS OF PRO-265</scope>
</reference>
<reference key="17">
    <citation type="journal article" date="2010" name="Nat. Cell Biol.">
        <title>A kinetochore-independent mechanism drives anaphase chromosome separation during acentrosomal meiosis.</title>
        <authorList>
            <person name="Dumont J."/>
            <person name="Oegema K."/>
            <person name="Desai A."/>
        </authorList>
    </citation>
    <scope>FUNCTION</scope>
</reference>
<reference key="18">
    <citation type="journal article" date="2013" name="Curr. Biol.">
        <title>Condensin and the spindle midzone prevent cytokinesis failure induced by chromatin bridges in C. elegans embryos.</title>
        <authorList>
            <person name="Bembenek J.N."/>
            <person name="Verbrugghe K.J."/>
            <person name="Khanikar J."/>
            <person name="Csankovszki G."/>
            <person name="Chan R.C."/>
        </authorList>
    </citation>
    <scope>FUNCTION</scope>
    <scope>SUBCELLULAR LOCATION</scope>
    <scope>PHOSPHORYLATION</scope>
</reference>
<reference key="19">
    <citation type="journal article" date="2014" name="Nat. Commun.">
        <title>Dynamic SUMO modification regulates mitotic chromosome assembly and cell cycle progression in Caenorhabditis elegans.</title>
        <authorList>
            <person name="Pelisch F."/>
            <person name="Sonneville R."/>
            <person name="Pourkarimi E."/>
            <person name="Agostinho A."/>
            <person name="Blow J.J."/>
            <person name="Gartner A."/>
            <person name="Hay R.T."/>
        </authorList>
    </citation>
    <scope>SUBCELLULAR LOCATION</scope>
    <scope>MUTAGENESIS OF LYS-155 AND LYS-168</scope>
</reference>
<comment type="function">
    <text evidence="3 4 5 6 7 8 9 10 11 12 14 15 16 17 18 20">Serine/threonine-protein kinase component of the chromosomal passenger complex (CPC), a complex that acts as a key regulator of chromosome segregation and cytokinesis (PubMed:10354474, PubMed:10975519, PubMed:10983970, PubMed:11050384, PubMed:11050385, PubMed:12707312, PubMed:9852156). The CPC complex has essential functions at the centromere in ensuring correct chromosome alignment and segregation (PubMed:10983970, PubMed:12707312). Required for histone H3 phosphorylation during segregation of homologous chromosomes in meiosis and mitosis (PubMed:18923084). Required for histone H3 'Ser-10' phosphorylation (PubMed:10354474, PubMed:10975519, PubMed:10983970, PubMed:11050384, PubMed:11050385, PubMed:11940606, PubMed:12015116, PubMed:9852156). Phosphorylates tlk-1 at 'Ser-634', which enhances its activity (PubMed:15916946). Phosphorylates zen-4 at 'Ser-680' (PubMed:15854913). Required for the recruitment of bub-1 to the ring-shaped domain between chromosomes during meiotic anaphase I (PubMed:20729837). Also required for the localization of the condensin I complex subunit smc-4 to mitotic chromosomes (PubMed:11914278). Acts at the spindle midzone and the midbody to prevent cleavage furrow regression upon chromatin obstructions during cytokinesis (PubMed:12213836, PubMed:23684975).</text>
</comment>
<comment type="catalytic activity">
    <reaction>
        <text>L-seryl-[protein] + ATP = O-phospho-L-seryl-[protein] + ADP + H(+)</text>
        <dbReference type="Rhea" id="RHEA:17989"/>
        <dbReference type="Rhea" id="RHEA-COMP:9863"/>
        <dbReference type="Rhea" id="RHEA-COMP:11604"/>
        <dbReference type="ChEBI" id="CHEBI:15378"/>
        <dbReference type="ChEBI" id="CHEBI:29999"/>
        <dbReference type="ChEBI" id="CHEBI:30616"/>
        <dbReference type="ChEBI" id="CHEBI:83421"/>
        <dbReference type="ChEBI" id="CHEBI:456216"/>
        <dbReference type="EC" id="2.7.11.1"/>
    </reaction>
</comment>
<comment type="catalytic activity">
    <reaction>
        <text>L-threonyl-[protein] + ATP = O-phospho-L-threonyl-[protein] + ADP + H(+)</text>
        <dbReference type="Rhea" id="RHEA:46608"/>
        <dbReference type="Rhea" id="RHEA-COMP:11060"/>
        <dbReference type="Rhea" id="RHEA-COMP:11605"/>
        <dbReference type="ChEBI" id="CHEBI:15378"/>
        <dbReference type="ChEBI" id="CHEBI:30013"/>
        <dbReference type="ChEBI" id="CHEBI:30616"/>
        <dbReference type="ChEBI" id="CHEBI:61977"/>
        <dbReference type="ChEBI" id="CHEBI:456216"/>
        <dbReference type="EC" id="2.7.11.1"/>
    </reaction>
</comment>
<comment type="subunit">
    <text evidence="6 7 12 13 15">Component of the CPC complex which consists of icp-1; csc-1; bir-1 and air-2 (PubMed:12707312). Within the complex, interacts with icp-1; csc-1 and bir-1 (PubMed:11050385, PubMed:12707312). Interacts with zen-4 (PubMed:11050384). Interacts with tlk-1 and bmk-1 (PubMed:15548597, PubMed:15916946).</text>
</comment>
<comment type="interaction">
    <interactant intactId="EBI-312947">
        <id>O01427</id>
    </interactant>
    <interactant intactId="EBI-312981">
        <id>G5EE37</id>
        <label>icp-1</label>
    </interactant>
    <organismsDiffer>false</organismsDiffer>
    <experiments>4</experiments>
</comment>
<comment type="interaction">
    <interactant intactId="EBI-312947">
        <id>O01427</id>
    </interactant>
    <interactant intactId="EBI-313389">
        <id>O17583</id>
        <label>lin-10</label>
    </interactant>
    <organismsDiffer>false</organismsDiffer>
    <experiments>2</experiments>
</comment>
<comment type="interaction">
    <interactant intactId="EBI-312947">
        <id>O01427</id>
    </interactant>
    <interactant intactId="EBI-3890382">
        <id>P34314</id>
        <label>tlk-1</label>
    </interactant>
    <organismsDiffer>false</organismsDiffer>
    <experiments>3</experiments>
</comment>
<comment type="subcellular location">
    <subcellularLocation>
        <location evidence="20">Cytoplasm</location>
        <location evidence="20">Cytoskeleton</location>
    </subcellularLocation>
    <subcellularLocation>
        <location evidence="16 18 19 20">Chromosome</location>
    </subcellularLocation>
    <subcellularLocation>
        <location evidence="18 20">Midbody</location>
    </subcellularLocation>
    <subcellularLocation>
        <location evidence="18 20">Cytoplasm</location>
        <location evidence="18 20">Cytoskeleton</location>
        <location evidence="18 20">Spindle</location>
    </subcellularLocation>
    <text evidence="16 18 19 20">Meiotic and mitotic chromosomes (PubMed:18923084, PubMed:9852156). During each division, relocates to the midbody microtubules (PubMed:23684975, PubMed:9852156). Localizes on chromosomes during metaphase and on the central spindle during anaphase (PubMed:23684975, PubMed:25475837). Localization to homologous chromosomes during segregation is dependent on lab-1 (PubMed:18923084).</text>
</comment>
<comment type="developmental stage">
    <text evidence="20">Present during gametogenesis and throughout embryogenesis (at protein level).</text>
</comment>
<comment type="PTM">
    <text evidence="18">Phosphorylated. Increased phosphorylation upon chromatin obstructions at anaphase.</text>
</comment>
<comment type="disruption phenotype">
    <text evidence="8 11">RNAi-mediated knockdown disrupts the localization of the condensin subunit smc-4 to mitotic chromosomes (PubMed:11914278). RNAi-mediated knockdown causes failure in mitotic chromosome segregation and cytokinesis, leading to aneuploidy (PubMed:11914278, PubMed:12213836).</text>
</comment>
<comment type="similarity">
    <text evidence="1">Belongs to the protein kinase superfamily. Ser/Thr protein kinase family. Aurora subfamily.</text>
</comment>
<gene>
    <name evidence="21" type="primary">air-2</name>
    <name evidence="21" type="synonym">stu-7</name>
    <name evidence="21" type="ORF">B0207.4</name>
</gene>
<proteinExistence type="evidence at protein level"/>
<evidence type="ECO:0000255" key="1">
    <source>
        <dbReference type="PROSITE-ProRule" id="PRU00159"/>
    </source>
</evidence>
<evidence type="ECO:0000255" key="2">
    <source>
        <dbReference type="PROSITE-ProRule" id="PRU10027"/>
    </source>
</evidence>
<evidence type="ECO:0000269" key="3">
    <source>
    </source>
</evidence>
<evidence type="ECO:0000269" key="4">
    <source>
    </source>
</evidence>
<evidence type="ECO:0000269" key="5">
    <source>
    </source>
</evidence>
<evidence type="ECO:0000269" key="6">
    <source>
    </source>
</evidence>
<evidence type="ECO:0000269" key="7">
    <source>
    </source>
</evidence>
<evidence type="ECO:0000269" key="8">
    <source>
    </source>
</evidence>
<evidence type="ECO:0000269" key="9">
    <source>
    </source>
</evidence>
<evidence type="ECO:0000269" key="10">
    <source>
    </source>
</evidence>
<evidence type="ECO:0000269" key="11">
    <source>
    </source>
</evidence>
<evidence type="ECO:0000269" key="12">
    <source>
    </source>
</evidence>
<evidence type="ECO:0000269" key="13">
    <source>
    </source>
</evidence>
<evidence type="ECO:0000269" key="14">
    <source>
    </source>
</evidence>
<evidence type="ECO:0000269" key="15">
    <source>
    </source>
</evidence>
<evidence type="ECO:0000269" key="16">
    <source>
    </source>
</evidence>
<evidence type="ECO:0000269" key="17">
    <source>
    </source>
</evidence>
<evidence type="ECO:0000269" key="18">
    <source>
    </source>
</evidence>
<evidence type="ECO:0000269" key="19">
    <source>
    </source>
</evidence>
<evidence type="ECO:0000269" key="20">
    <source>
    </source>
</evidence>
<evidence type="ECO:0000312" key="21">
    <source>
        <dbReference type="WormBase" id="B0207.4"/>
    </source>
</evidence>
<organism>
    <name type="scientific">Caenorhabditis elegans</name>
    <dbReference type="NCBI Taxonomy" id="6239"/>
    <lineage>
        <taxon>Eukaryota</taxon>
        <taxon>Metazoa</taxon>
        <taxon>Ecdysozoa</taxon>
        <taxon>Nematoda</taxon>
        <taxon>Chromadorea</taxon>
        <taxon>Rhabditida</taxon>
        <taxon>Rhabditina</taxon>
        <taxon>Rhabditomorpha</taxon>
        <taxon>Rhabditoidea</taxon>
        <taxon>Rhabditidae</taxon>
        <taxon>Peloderinae</taxon>
        <taxon>Caenorhabditis</taxon>
    </lineage>
</organism>
<accession>O01427</accession>
<dbReference type="EC" id="2.7.11.1"/>
<dbReference type="EMBL" id="AF071207">
    <property type="protein sequence ID" value="AAC70945.1"/>
    <property type="molecule type" value="mRNA"/>
</dbReference>
<dbReference type="EMBL" id="BX284601">
    <property type="protein sequence ID" value="CCD61317.1"/>
    <property type="molecule type" value="Genomic_DNA"/>
</dbReference>
<dbReference type="PIR" id="B87790">
    <property type="entry name" value="B87790"/>
</dbReference>
<dbReference type="PIR" id="T43221">
    <property type="entry name" value="T43221"/>
</dbReference>
<dbReference type="RefSeq" id="NP_491714.1">
    <property type="nucleotide sequence ID" value="NM_059313.9"/>
</dbReference>
<dbReference type="SMR" id="O01427"/>
<dbReference type="BioGRID" id="37722">
    <property type="interactions" value="18"/>
</dbReference>
<dbReference type="ComplexPortal" id="CPX-3461">
    <property type="entry name" value="Chromosomal passenger complex"/>
</dbReference>
<dbReference type="DIP" id="DIP-25477N"/>
<dbReference type="FunCoup" id="O01427">
    <property type="interactions" value="917"/>
</dbReference>
<dbReference type="IntAct" id="O01427">
    <property type="interactions" value="7"/>
</dbReference>
<dbReference type="MINT" id="O01427"/>
<dbReference type="STRING" id="6239.B0207.4.1"/>
<dbReference type="PaxDb" id="6239-B0207.4"/>
<dbReference type="PeptideAtlas" id="O01427"/>
<dbReference type="EnsemblMetazoa" id="B0207.4.1">
    <property type="protein sequence ID" value="B0207.4.1"/>
    <property type="gene ID" value="WBGene00000099"/>
</dbReference>
<dbReference type="EnsemblMetazoa" id="B0207.4.2">
    <property type="protein sequence ID" value="B0207.4.2"/>
    <property type="gene ID" value="WBGene00000099"/>
</dbReference>
<dbReference type="GeneID" id="172268"/>
<dbReference type="KEGG" id="cel:CELE_B0207.4"/>
<dbReference type="UCSC" id="B0207.4">
    <property type="organism name" value="c. elegans"/>
</dbReference>
<dbReference type="AGR" id="WB:WBGene00000099"/>
<dbReference type="CTD" id="172268"/>
<dbReference type="WormBase" id="B0207.4">
    <property type="protein sequence ID" value="CE24761"/>
    <property type="gene ID" value="WBGene00000099"/>
    <property type="gene designation" value="air-2"/>
</dbReference>
<dbReference type="eggNOG" id="KOG0580">
    <property type="taxonomic scope" value="Eukaryota"/>
</dbReference>
<dbReference type="GeneTree" id="ENSGT00940000158980"/>
<dbReference type="HOGENOM" id="CLU_000288_63_0_1"/>
<dbReference type="InParanoid" id="O01427"/>
<dbReference type="OMA" id="ESRFPEW"/>
<dbReference type="OrthoDB" id="377346at2759"/>
<dbReference type="PhylomeDB" id="O01427"/>
<dbReference type="Reactome" id="R-CEL-8854050">
    <property type="pathway name" value="FBXL7 down-regulates AURKA during mitotic entry and in early mitosis"/>
</dbReference>
<dbReference type="SignaLink" id="O01427"/>
<dbReference type="PRO" id="PR:O01427"/>
<dbReference type="Proteomes" id="UP000001940">
    <property type="component" value="Chromosome I"/>
</dbReference>
<dbReference type="Bgee" id="WBGene00000099">
    <property type="expression patterns" value="Expressed in germ line (C elegans) and 4 other cell types or tissues"/>
</dbReference>
<dbReference type="GO" id="GO:0005813">
    <property type="term" value="C:centrosome"/>
    <property type="evidence" value="ECO:0000318"/>
    <property type="project" value="GO_Central"/>
</dbReference>
<dbReference type="GO" id="GO:0032133">
    <property type="term" value="C:chromosome passenger complex"/>
    <property type="evidence" value="ECO:0000353"/>
    <property type="project" value="ComplexPortal"/>
</dbReference>
<dbReference type="GO" id="GO:0000793">
    <property type="term" value="C:condensed chromosome"/>
    <property type="evidence" value="ECO:0000314"/>
    <property type="project" value="WormBase"/>
</dbReference>
<dbReference type="GO" id="GO:0000794">
    <property type="term" value="C:condensed nuclear chromosome"/>
    <property type="evidence" value="ECO:0000314"/>
    <property type="project" value="WormBase"/>
</dbReference>
<dbReference type="GO" id="GO:0005737">
    <property type="term" value="C:cytoplasm"/>
    <property type="evidence" value="ECO:0007669"/>
    <property type="project" value="UniProtKB-KW"/>
</dbReference>
<dbReference type="GO" id="GO:0000776">
    <property type="term" value="C:kinetochore"/>
    <property type="evidence" value="ECO:0000318"/>
    <property type="project" value="GO_Central"/>
</dbReference>
<dbReference type="GO" id="GO:0015630">
    <property type="term" value="C:microtubule cytoskeleton"/>
    <property type="evidence" value="ECO:0000314"/>
    <property type="project" value="ComplexPortal"/>
</dbReference>
<dbReference type="GO" id="GO:0030496">
    <property type="term" value="C:midbody"/>
    <property type="evidence" value="ECO:0007669"/>
    <property type="project" value="UniProtKB-SubCell"/>
</dbReference>
<dbReference type="GO" id="GO:0005634">
    <property type="term" value="C:nucleus"/>
    <property type="evidence" value="ECO:0000318"/>
    <property type="project" value="GO_Central"/>
</dbReference>
<dbReference type="GO" id="GO:0005819">
    <property type="term" value="C:spindle"/>
    <property type="evidence" value="ECO:0000314"/>
    <property type="project" value="WormBase"/>
</dbReference>
<dbReference type="GO" id="GO:0005876">
    <property type="term" value="C:spindle microtubule"/>
    <property type="evidence" value="ECO:0000318"/>
    <property type="project" value="GO_Central"/>
</dbReference>
<dbReference type="GO" id="GO:0051233">
    <property type="term" value="C:spindle midzone"/>
    <property type="evidence" value="ECO:0000314"/>
    <property type="project" value="WormBase"/>
</dbReference>
<dbReference type="GO" id="GO:0000922">
    <property type="term" value="C:spindle pole"/>
    <property type="evidence" value="ECO:0000318"/>
    <property type="project" value="GO_Central"/>
</dbReference>
<dbReference type="GO" id="GO:0005524">
    <property type="term" value="F:ATP binding"/>
    <property type="evidence" value="ECO:0007669"/>
    <property type="project" value="UniProtKB-KW"/>
</dbReference>
<dbReference type="GO" id="GO:0051117">
    <property type="term" value="F:ATPase binding"/>
    <property type="evidence" value="ECO:0000353"/>
    <property type="project" value="WormBase"/>
</dbReference>
<dbReference type="GO" id="GO:0140996">
    <property type="term" value="F:histone H3 kinase activity"/>
    <property type="evidence" value="ECO:0000314"/>
    <property type="project" value="WormBase"/>
</dbReference>
<dbReference type="GO" id="GO:0019894">
    <property type="term" value="F:kinesin binding"/>
    <property type="evidence" value="ECO:0000353"/>
    <property type="project" value="WormBase"/>
</dbReference>
<dbReference type="GO" id="GO:0004672">
    <property type="term" value="F:protein kinase activity"/>
    <property type="evidence" value="ECO:0000314"/>
    <property type="project" value="WormBase"/>
</dbReference>
<dbReference type="GO" id="GO:0106310">
    <property type="term" value="F:protein serine kinase activity"/>
    <property type="evidence" value="ECO:0007669"/>
    <property type="project" value="RHEA"/>
</dbReference>
<dbReference type="GO" id="GO:0004674">
    <property type="term" value="F:protein serine/threonine kinase activity"/>
    <property type="evidence" value="ECO:0000314"/>
    <property type="project" value="WormBase"/>
</dbReference>
<dbReference type="GO" id="GO:0030261">
    <property type="term" value="P:chromosome condensation"/>
    <property type="evidence" value="ECO:0000315"/>
    <property type="project" value="WormBase"/>
</dbReference>
<dbReference type="GO" id="GO:0007059">
    <property type="term" value="P:chromosome segregation"/>
    <property type="evidence" value="ECO:0000315"/>
    <property type="project" value="WormBase"/>
</dbReference>
<dbReference type="GO" id="GO:0045184">
    <property type="term" value="P:establishment of protein localization"/>
    <property type="evidence" value="ECO:0000315"/>
    <property type="project" value="WormBase"/>
</dbReference>
<dbReference type="GO" id="GO:0051257">
    <property type="term" value="P:meiotic spindle midzone assembly"/>
    <property type="evidence" value="ECO:0000315"/>
    <property type="project" value="UniProtKB"/>
</dbReference>
<dbReference type="GO" id="GO:0000278">
    <property type="term" value="P:mitotic cell cycle"/>
    <property type="evidence" value="ECO:0000303"/>
    <property type="project" value="ComplexPortal"/>
</dbReference>
<dbReference type="GO" id="GO:0000281">
    <property type="term" value="P:mitotic cytokinesis"/>
    <property type="evidence" value="ECO:0000303"/>
    <property type="project" value="ComplexPortal"/>
</dbReference>
<dbReference type="GO" id="GO:0051256">
    <property type="term" value="P:mitotic spindle midzone assembly"/>
    <property type="evidence" value="ECO:0000315"/>
    <property type="project" value="WormBase"/>
</dbReference>
<dbReference type="GO" id="GO:0007052">
    <property type="term" value="P:mitotic spindle organization"/>
    <property type="evidence" value="ECO:0000318"/>
    <property type="project" value="GO_Central"/>
</dbReference>
<dbReference type="GO" id="GO:0090267">
    <property type="term" value="P:positive regulation of mitotic cell cycle spindle assembly checkpoint"/>
    <property type="evidence" value="ECO:0000303"/>
    <property type="project" value="ComplexPortal"/>
</dbReference>
<dbReference type="GO" id="GO:1901970">
    <property type="term" value="P:positive regulation of mitotic sister chromatid separation"/>
    <property type="evidence" value="ECO:0000303"/>
    <property type="project" value="ComplexPortal"/>
</dbReference>
<dbReference type="GO" id="GO:0031991">
    <property type="term" value="P:regulation of actomyosin contractile ring contraction"/>
    <property type="evidence" value="ECO:0000315"/>
    <property type="project" value="WormBase"/>
</dbReference>
<dbReference type="GO" id="GO:0032465">
    <property type="term" value="P:regulation of cytokinesis"/>
    <property type="evidence" value="ECO:0000318"/>
    <property type="project" value="GO_Central"/>
</dbReference>
<dbReference type="CDD" id="cd14007">
    <property type="entry name" value="STKc_Aurora"/>
    <property type="match status" value="1"/>
</dbReference>
<dbReference type="FunFam" id="3.30.200.20:FF:000042">
    <property type="entry name" value="Aurora kinase A"/>
    <property type="match status" value="1"/>
</dbReference>
<dbReference type="FunFam" id="1.10.510.10:FF:000235">
    <property type="entry name" value="Serine/threonine-protein kinase ark1"/>
    <property type="match status" value="1"/>
</dbReference>
<dbReference type="Gene3D" id="3.30.200.20">
    <property type="entry name" value="Phosphorylase Kinase, domain 1"/>
    <property type="match status" value="1"/>
</dbReference>
<dbReference type="Gene3D" id="1.10.510.10">
    <property type="entry name" value="Transferase(Phosphotransferase) domain 1"/>
    <property type="match status" value="1"/>
</dbReference>
<dbReference type="InterPro" id="IPR030616">
    <property type="entry name" value="Aur-like"/>
</dbReference>
<dbReference type="InterPro" id="IPR011009">
    <property type="entry name" value="Kinase-like_dom_sf"/>
</dbReference>
<dbReference type="InterPro" id="IPR000719">
    <property type="entry name" value="Prot_kinase_dom"/>
</dbReference>
<dbReference type="InterPro" id="IPR017441">
    <property type="entry name" value="Protein_kinase_ATP_BS"/>
</dbReference>
<dbReference type="InterPro" id="IPR008271">
    <property type="entry name" value="Ser/Thr_kinase_AS"/>
</dbReference>
<dbReference type="PANTHER" id="PTHR24350">
    <property type="entry name" value="SERINE/THREONINE-PROTEIN KINASE IAL-RELATED"/>
    <property type="match status" value="1"/>
</dbReference>
<dbReference type="Pfam" id="PF00069">
    <property type="entry name" value="Pkinase"/>
    <property type="match status" value="1"/>
</dbReference>
<dbReference type="PIRSF" id="PIRSF000654">
    <property type="entry name" value="Integrin-linked_kinase"/>
    <property type="match status" value="1"/>
</dbReference>
<dbReference type="SMART" id="SM00220">
    <property type="entry name" value="S_TKc"/>
    <property type="match status" value="1"/>
</dbReference>
<dbReference type="SUPFAM" id="SSF56112">
    <property type="entry name" value="Protein kinase-like (PK-like)"/>
    <property type="match status" value="1"/>
</dbReference>
<dbReference type="PROSITE" id="PS00107">
    <property type="entry name" value="PROTEIN_KINASE_ATP"/>
    <property type="match status" value="1"/>
</dbReference>
<dbReference type="PROSITE" id="PS50011">
    <property type="entry name" value="PROTEIN_KINASE_DOM"/>
    <property type="match status" value="1"/>
</dbReference>
<dbReference type="PROSITE" id="PS00108">
    <property type="entry name" value="PROTEIN_KINASE_ST"/>
    <property type="match status" value="1"/>
</dbReference>
<feature type="chain" id="PRO_0000268640" description="Aurora/IPL1-related protein kinase 2">
    <location>
        <begin position="1"/>
        <end position="305"/>
    </location>
</feature>
<feature type="domain" description="Protein kinase" evidence="1">
    <location>
        <begin position="30"/>
        <end position="280"/>
    </location>
</feature>
<feature type="active site" description="Proton acceptor" evidence="1 2">
    <location>
        <position position="153"/>
    </location>
</feature>
<feature type="binding site" evidence="1">
    <location>
        <begin position="36"/>
        <end position="44"/>
    </location>
    <ligand>
        <name>ATP</name>
        <dbReference type="ChEBI" id="CHEBI:30616"/>
    </ligand>
</feature>
<feature type="binding site" evidence="1">
    <location>
        <position position="59"/>
    </location>
    <ligand>
        <name>ATP</name>
        <dbReference type="ChEBI" id="CHEBI:30616"/>
    </ligand>
</feature>
<feature type="mutagenesis site" description="Reduced in vitro sumo-1 conjugation." evidence="19">
    <original>K</original>
    <variation>R</variation>
    <location>
        <position position="155"/>
    </location>
</feature>
<feature type="mutagenesis site" description="Reduced in vitro sumo-1 conjugation." evidence="19">
    <original>K</original>
    <variation>R</variation>
    <location>
        <position position="168"/>
    </location>
</feature>
<feature type="mutagenesis site" description="In or207; temperature sensitive. At 15 degrees Celsius, there are no observed changed in meiosis or mitosis. At 20 or 25 degrees Celsius, meiosis appears normal, embryos are not viable and eggs do not complete the first embryonic division due to defects in chromosome segregation and cytokinesis. In these embryos, phosphorylation of histone H3 is abrogated, but this is not abrogated in germ line nuclei. Embryonic viability is increased in a lab-1 tm1791 mutant background and 17% of embryos complete embryogenesis and reach adulthood as fertile animals. Moreover, the phosphorylation of histone H3 defect is rescued in 30% of these embryos." evidence="16">
    <original>P</original>
    <variation>L</variation>
    <location>
        <position position="265"/>
    </location>
</feature>